<accession>P57659</accession>
<comment type="function">
    <text evidence="1">Co-chaperone involved in the maturation of iron-sulfur cluster-containing proteins. Seems to help targeting proteins to be folded toward HscA (By similarity).</text>
</comment>
<comment type="subunit">
    <text evidence="1">Interacts with HscA and stimulates its ATPase activity. Interacts with IscU (By similarity).</text>
</comment>
<comment type="similarity">
    <text evidence="2">Belongs to the HscB family.</text>
</comment>
<reference key="1">
    <citation type="journal article" date="2000" name="Nature">
        <title>Genome sequence of the endocellular bacterial symbiont of aphids Buchnera sp. APS.</title>
        <authorList>
            <person name="Shigenobu S."/>
            <person name="Watanabe H."/>
            <person name="Hattori M."/>
            <person name="Sakaki Y."/>
            <person name="Ishikawa H."/>
        </authorList>
    </citation>
    <scope>NUCLEOTIDE SEQUENCE [LARGE SCALE GENOMIC DNA]</scope>
    <source>
        <strain>APS</strain>
    </source>
</reference>
<sequence length="174" mass="21293">MNYFTLFDLPRKFNIDKKLLSQNFYKLQLKFHPDLFINDSESKKKIILEKSIQINKGYKTLKNFLNRAIYFLCLNGYEVKKETLLLKNNDFLIRYFSLYEQLDNLKENNFNKKELNNLEQIIQKKIIYCKKKIELEFEKTRYKKVIKIISELLFFEKIKDVLKKEYNIYLSQIN</sequence>
<organism>
    <name type="scientific">Buchnera aphidicola subsp. Acyrthosiphon pisum (strain APS)</name>
    <name type="common">Acyrthosiphon pisum symbiotic bacterium</name>
    <dbReference type="NCBI Taxonomy" id="107806"/>
    <lineage>
        <taxon>Bacteria</taxon>
        <taxon>Pseudomonadati</taxon>
        <taxon>Pseudomonadota</taxon>
        <taxon>Gammaproteobacteria</taxon>
        <taxon>Enterobacterales</taxon>
        <taxon>Erwiniaceae</taxon>
        <taxon>Buchnera</taxon>
    </lineage>
</organism>
<protein>
    <recommendedName>
        <fullName>Co-chaperone protein HscB</fullName>
    </recommendedName>
    <alternativeName>
        <fullName>Hsc20</fullName>
    </alternativeName>
</protein>
<proteinExistence type="inferred from homology"/>
<evidence type="ECO:0000250" key="1"/>
<evidence type="ECO:0000305" key="2"/>
<gene>
    <name type="primary">hscB</name>
    <name type="ordered locus">BU604</name>
</gene>
<feature type="chain" id="PRO_0000070960" description="Co-chaperone protein HscB">
    <location>
        <begin position="1"/>
        <end position="174"/>
    </location>
</feature>
<feature type="domain" description="J">
    <location>
        <begin position="2"/>
        <end position="74"/>
    </location>
</feature>
<name>HSCB_BUCAI</name>
<dbReference type="EMBL" id="BA000003">
    <property type="protein sequence ID" value="BAB13288.1"/>
    <property type="molecule type" value="Genomic_DNA"/>
</dbReference>
<dbReference type="RefSeq" id="NP_240402.1">
    <property type="nucleotide sequence ID" value="NC_002528.1"/>
</dbReference>
<dbReference type="RefSeq" id="WP_010896182.1">
    <property type="nucleotide sequence ID" value="NC_002528.1"/>
</dbReference>
<dbReference type="SMR" id="P57659"/>
<dbReference type="STRING" id="563178.BUAP5A_596"/>
<dbReference type="EnsemblBacteria" id="BAB13288">
    <property type="protein sequence ID" value="BAB13288"/>
    <property type="gene ID" value="BAB13288"/>
</dbReference>
<dbReference type="KEGG" id="buc:BU604"/>
<dbReference type="PATRIC" id="fig|107806.10.peg.606"/>
<dbReference type="eggNOG" id="COG1076">
    <property type="taxonomic scope" value="Bacteria"/>
</dbReference>
<dbReference type="HOGENOM" id="CLU_068529_2_0_6"/>
<dbReference type="Proteomes" id="UP000001806">
    <property type="component" value="Chromosome"/>
</dbReference>
<dbReference type="GO" id="GO:0001671">
    <property type="term" value="F:ATPase activator activity"/>
    <property type="evidence" value="ECO:0007669"/>
    <property type="project" value="InterPro"/>
</dbReference>
<dbReference type="GO" id="GO:0051087">
    <property type="term" value="F:protein-folding chaperone binding"/>
    <property type="evidence" value="ECO:0007669"/>
    <property type="project" value="InterPro"/>
</dbReference>
<dbReference type="GO" id="GO:0044571">
    <property type="term" value="P:[2Fe-2S] cluster assembly"/>
    <property type="evidence" value="ECO:0007669"/>
    <property type="project" value="InterPro"/>
</dbReference>
<dbReference type="GO" id="GO:0051259">
    <property type="term" value="P:protein complex oligomerization"/>
    <property type="evidence" value="ECO:0007669"/>
    <property type="project" value="InterPro"/>
</dbReference>
<dbReference type="GO" id="GO:0006457">
    <property type="term" value="P:protein folding"/>
    <property type="evidence" value="ECO:0007669"/>
    <property type="project" value="UniProtKB-UniRule"/>
</dbReference>
<dbReference type="CDD" id="cd06257">
    <property type="entry name" value="DnaJ"/>
    <property type="match status" value="1"/>
</dbReference>
<dbReference type="Gene3D" id="1.10.287.110">
    <property type="entry name" value="DnaJ domain"/>
    <property type="match status" value="1"/>
</dbReference>
<dbReference type="Gene3D" id="1.20.1280.20">
    <property type="entry name" value="HscB, C-terminal domain"/>
    <property type="match status" value="1"/>
</dbReference>
<dbReference type="HAMAP" id="MF_00682">
    <property type="entry name" value="HscB"/>
    <property type="match status" value="1"/>
</dbReference>
<dbReference type="InterPro" id="IPR001623">
    <property type="entry name" value="DnaJ_domain"/>
</dbReference>
<dbReference type="InterPro" id="IPR004640">
    <property type="entry name" value="HscB"/>
</dbReference>
<dbReference type="InterPro" id="IPR036386">
    <property type="entry name" value="HscB_C_sf"/>
</dbReference>
<dbReference type="InterPro" id="IPR009073">
    <property type="entry name" value="HscB_oligo_C"/>
</dbReference>
<dbReference type="InterPro" id="IPR036869">
    <property type="entry name" value="J_dom_sf"/>
</dbReference>
<dbReference type="NCBIfam" id="TIGR00714">
    <property type="entry name" value="hscB"/>
    <property type="match status" value="1"/>
</dbReference>
<dbReference type="PANTHER" id="PTHR14021">
    <property type="entry name" value="IRON-SULFUR CLUSTER CO-CHAPERONE PROTEIN HSCB"/>
    <property type="match status" value="1"/>
</dbReference>
<dbReference type="PANTHER" id="PTHR14021:SF15">
    <property type="entry name" value="IRON-SULFUR CLUSTER CO-CHAPERONE PROTEIN HSCB"/>
    <property type="match status" value="1"/>
</dbReference>
<dbReference type="Pfam" id="PF07743">
    <property type="entry name" value="HSCB_C"/>
    <property type="match status" value="1"/>
</dbReference>
<dbReference type="SMART" id="SM00271">
    <property type="entry name" value="DnaJ"/>
    <property type="match status" value="1"/>
</dbReference>
<dbReference type="SUPFAM" id="SSF46565">
    <property type="entry name" value="Chaperone J-domain"/>
    <property type="match status" value="1"/>
</dbReference>
<dbReference type="SUPFAM" id="SSF47144">
    <property type="entry name" value="HSC20 (HSCB), C-terminal oligomerisation domain"/>
    <property type="match status" value="1"/>
</dbReference>
<dbReference type="PROSITE" id="PS50076">
    <property type="entry name" value="DNAJ_2"/>
    <property type="match status" value="1"/>
</dbReference>
<keyword id="KW-0143">Chaperone</keyword>
<keyword id="KW-1185">Reference proteome</keyword>